<dbReference type="EMBL" id="BA000031">
    <property type="protein sequence ID" value="BAC60730.1"/>
    <property type="molecule type" value="Genomic_DNA"/>
</dbReference>
<dbReference type="RefSeq" id="NP_798846.1">
    <property type="nucleotide sequence ID" value="NC_004603.1"/>
</dbReference>
<dbReference type="RefSeq" id="WP_005490380.1">
    <property type="nucleotide sequence ID" value="NC_004603.1"/>
</dbReference>
<dbReference type="SMR" id="Q87LZ1"/>
<dbReference type="TCDB" id="1.B.1.1.30">
    <property type="family name" value="the general bacterial porin (gbp) family"/>
</dbReference>
<dbReference type="GeneID" id="1189982"/>
<dbReference type="KEGG" id="vpa:VP2467"/>
<dbReference type="PATRIC" id="fig|223926.6.peg.2367"/>
<dbReference type="eggNOG" id="COG3203">
    <property type="taxonomic scope" value="Bacteria"/>
</dbReference>
<dbReference type="HOGENOM" id="CLU_058202_1_2_6"/>
<dbReference type="Proteomes" id="UP000002493">
    <property type="component" value="Chromosome 1"/>
</dbReference>
<dbReference type="GO" id="GO:0009279">
    <property type="term" value="C:cell outer membrane"/>
    <property type="evidence" value="ECO:0007669"/>
    <property type="project" value="UniProtKB-SubCell"/>
</dbReference>
<dbReference type="GO" id="GO:0046930">
    <property type="term" value="C:pore complex"/>
    <property type="evidence" value="ECO:0007669"/>
    <property type="project" value="UniProtKB-KW"/>
</dbReference>
<dbReference type="GO" id="GO:0015288">
    <property type="term" value="F:porin activity"/>
    <property type="evidence" value="ECO:0007669"/>
    <property type="project" value="UniProtKB-KW"/>
</dbReference>
<dbReference type="GO" id="GO:0006811">
    <property type="term" value="P:monoatomic ion transport"/>
    <property type="evidence" value="ECO:0007669"/>
    <property type="project" value="UniProtKB-KW"/>
</dbReference>
<dbReference type="CDD" id="cd00342">
    <property type="entry name" value="gram_neg_porins"/>
    <property type="match status" value="1"/>
</dbReference>
<dbReference type="Gene3D" id="2.40.160.10">
    <property type="entry name" value="Porin"/>
    <property type="match status" value="1"/>
</dbReference>
<dbReference type="InterPro" id="IPR050298">
    <property type="entry name" value="Gram-neg_bact_OMP"/>
</dbReference>
<dbReference type="InterPro" id="IPR033900">
    <property type="entry name" value="Gram_neg_porin_domain"/>
</dbReference>
<dbReference type="InterPro" id="IPR023614">
    <property type="entry name" value="Porin_dom_sf"/>
</dbReference>
<dbReference type="PANTHER" id="PTHR34501:SF2">
    <property type="entry name" value="OUTER MEMBRANE PORIN F-RELATED"/>
    <property type="match status" value="1"/>
</dbReference>
<dbReference type="PANTHER" id="PTHR34501">
    <property type="entry name" value="PROTEIN YDDL-RELATED"/>
    <property type="match status" value="1"/>
</dbReference>
<dbReference type="Pfam" id="PF13609">
    <property type="entry name" value="Porin_4"/>
    <property type="match status" value="1"/>
</dbReference>
<dbReference type="SUPFAM" id="SSF56935">
    <property type="entry name" value="Porins"/>
    <property type="match status" value="1"/>
</dbReference>
<protein>
    <recommendedName>
        <fullName>Outer membrane protein U</fullName>
    </recommendedName>
    <alternativeName>
        <fullName>Porin OmpU</fullName>
    </alternativeName>
</protein>
<reference key="1">
    <citation type="journal article" date="2003" name="Lancet">
        <title>Genome sequence of Vibrio parahaemolyticus: a pathogenic mechanism distinct from that of V. cholerae.</title>
        <authorList>
            <person name="Makino K."/>
            <person name="Oshima K."/>
            <person name="Kurokawa K."/>
            <person name="Yokoyama K."/>
            <person name="Uda T."/>
            <person name="Tagomori K."/>
            <person name="Iijima Y."/>
            <person name="Najima M."/>
            <person name="Nakano M."/>
            <person name="Yamashita A."/>
            <person name="Kubota Y."/>
            <person name="Kimura S."/>
            <person name="Yasunaga T."/>
            <person name="Honda T."/>
            <person name="Shinagawa H."/>
            <person name="Hattori M."/>
            <person name="Iida T."/>
        </authorList>
    </citation>
    <scope>NUCLEOTIDE SEQUENCE [LARGE SCALE GENOMIC DNA]</scope>
    <source>
        <strain>RIMD 2210633</strain>
    </source>
</reference>
<sequence>MKKTLIALSVSAAAMATGVNAAELYNQDGTSLEMGGRAEARLSMKDGDAQDNSRIRLNFLGTQAINDNLYGVGFWEGEFTTNEQGGVDGDVNKDSSNLDTRYAYAGLGGAWGEFTYGKNEGALGVITDFTDIMAYHGNSAADKLAVADRSDNMMSYKGQFENLSVKASYRFADRKLNDAGTEYTDNGQDGYSLSAIYAVADTGLELGAGYADQDEANEYMLAASYTMGDLYFAGIFTDGEKAKTEGDYTGYELAGAYTLGQTVFTTTYNNAETNNETSANNFAVDASYYFKPNFRGYVSYNFNLIDSGDKLGKVGGNTTASKADAEDELALGLRYDF</sequence>
<comment type="function">
    <text evidence="1">Forms pores that allow passive diffusion of small molecules across the outer membrane.</text>
</comment>
<comment type="subunit">
    <text evidence="1">Homotrimer.</text>
</comment>
<comment type="subcellular location">
    <subcellularLocation>
        <location evidence="1">Cell outer membrane</location>
        <topology evidence="1">Multi-pass membrane protein</topology>
    </subcellularLocation>
</comment>
<comment type="similarity">
    <text evidence="3">Belongs to the Gram-negative porin family.</text>
</comment>
<feature type="signal peptide" evidence="2">
    <location>
        <begin position="1"/>
        <end position="21"/>
    </location>
</feature>
<feature type="chain" id="PRO_0000025289" description="Outer membrane protein U">
    <location>
        <begin position="22"/>
        <end position="337"/>
    </location>
</feature>
<organism>
    <name type="scientific">Vibrio parahaemolyticus serotype O3:K6 (strain RIMD 2210633)</name>
    <dbReference type="NCBI Taxonomy" id="223926"/>
    <lineage>
        <taxon>Bacteria</taxon>
        <taxon>Pseudomonadati</taxon>
        <taxon>Pseudomonadota</taxon>
        <taxon>Gammaproteobacteria</taxon>
        <taxon>Vibrionales</taxon>
        <taxon>Vibrionaceae</taxon>
        <taxon>Vibrio</taxon>
    </lineage>
</organism>
<gene>
    <name type="primary">ompU</name>
    <name type="ordered locus">VP2467</name>
</gene>
<keyword id="KW-0998">Cell outer membrane</keyword>
<keyword id="KW-0406">Ion transport</keyword>
<keyword id="KW-0472">Membrane</keyword>
<keyword id="KW-0626">Porin</keyword>
<keyword id="KW-0732">Signal</keyword>
<keyword id="KW-0812">Transmembrane</keyword>
<keyword id="KW-1134">Transmembrane beta strand</keyword>
<keyword id="KW-0813">Transport</keyword>
<name>OMPU_VIBPA</name>
<proteinExistence type="inferred from homology"/>
<evidence type="ECO:0000250" key="1"/>
<evidence type="ECO:0000255" key="2"/>
<evidence type="ECO:0000305" key="3"/>
<accession>Q87LZ1</accession>